<reference key="1">
    <citation type="submission" date="2008-10" db="EMBL/GenBank/DDBJ databases">
        <title>Genome sequence of Bacillus cereus AH187.</title>
        <authorList>
            <person name="Dodson R.J."/>
            <person name="Durkin A.S."/>
            <person name="Rosovitz M.J."/>
            <person name="Rasko D.A."/>
            <person name="Kolsto A.B."/>
            <person name="Okstad O.A."/>
            <person name="Ravel J."/>
            <person name="Sutton G."/>
        </authorList>
    </citation>
    <scope>NUCLEOTIDE SEQUENCE [LARGE SCALE GENOMIC DNA]</scope>
    <source>
        <strain>AH187</strain>
    </source>
</reference>
<evidence type="ECO:0000255" key="1">
    <source>
        <dbReference type="HAMAP-Rule" id="MF_00121"/>
    </source>
</evidence>
<feature type="chain" id="PRO_1000117614" description="Aspartyl/glutamyl-tRNA(Asn/Gln) amidotransferase subunit B">
    <location>
        <begin position="1"/>
        <end position="475"/>
    </location>
</feature>
<gene>
    <name evidence="1" type="primary">gatB</name>
    <name type="ordered locus">BCAH187_A0395</name>
</gene>
<dbReference type="EC" id="6.3.5.-" evidence="1"/>
<dbReference type="EMBL" id="CP001177">
    <property type="protein sequence ID" value="ACJ80476.1"/>
    <property type="molecule type" value="Genomic_DNA"/>
</dbReference>
<dbReference type="SMR" id="B7HSY1"/>
<dbReference type="KEGG" id="bcr:BCAH187_A0395"/>
<dbReference type="HOGENOM" id="CLU_019240_0_0_9"/>
<dbReference type="Proteomes" id="UP000002214">
    <property type="component" value="Chromosome"/>
</dbReference>
<dbReference type="GO" id="GO:0050566">
    <property type="term" value="F:asparaginyl-tRNA synthase (glutamine-hydrolyzing) activity"/>
    <property type="evidence" value="ECO:0007669"/>
    <property type="project" value="RHEA"/>
</dbReference>
<dbReference type="GO" id="GO:0005524">
    <property type="term" value="F:ATP binding"/>
    <property type="evidence" value="ECO:0007669"/>
    <property type="project" value="UniProtKB-KW"/>
</dbReference>
<dbReference type="GO" id="GO:0050567">
    <property type="term" value="F:glutaminyl-tRNA synthase (glutamine-hydrolyzing) activity"/>
    <property type="evidence" value="ECO:0007669"/>
    <property type="project" value="UniProtKB-UniRule"/>
</dbReference>
<dbReference type="GO" id="GO:0070681">
    <property type="term" value="P:glutaminyl-tRNAGln biosynthesis via transamidation"/>
    <property type="evidence" value="ECO:0007669"/>
    <property type="project" value="TreeGrafter"/>
</dbReference>
<dbReference type="GO" id="GO:0006412">
    <property type="term" value="P:translation"/>
    <property type="evidence" value="ECO:0007669"/>
    <property type="project" value="UniProtKB-UniRule"/>
</dbReference>
<dbReference type="FunFam" id="1.10.10.410:FF:000001">
    <property type="entry name" value="Aspartyl/glutamyl-tRNA(Asn/Gln) amidotransferase subunit B"/>
    <property type="match status" value="1"/>
</dbReference>
<dbReference type="FunFam" id="1.10.150.380:FF:000001">
    <property type="entry name" value="Aspartyl/glutamyl-tRNA(Asn/Gln) amidotransferase subunit B"/>
    <property type="match status" value="1"/>
</dbReference>
<dbReference type="Gene3D" id="1.10.10.410">
    <property type="match status" value="1"/>
</dbReference>
<dbReference type="Gene3D" id="1.10.150.380">
    <property type="entry name" value="GatB domain, N-terminal subdomain"/>
    <property type="match status" value="1"/>
</dbReference>
<dbReference type="HAMAP" id="MF_00121">
    <property type="entry name" value="GatB"/>
    <property type="match status" value="1"/>
</dbReference>
<dbReference type="InterPro" id="IPR017959">
    <property type="entry name" value="Asn/Gln-tRNA_amidoTrfase_suB/E"/>
</dbReference>
<dbReference type="InterPro" id="IPR006075">
    <property type="entry name" value="Asn/Gln-tRNA_Trfase_suB/E_cat"/>
</dbReference>
<dbReference type="InterPro" id="IPR018027">
    <property type="entry name" value="Asn/Gln_amidotransferase"/>
</dbReference>
<dbReference type="InterPro" id="IPR003789">
    <property type="entry name" value="Asn/Gln_tRNA_amidoTrase-B-like"/>
</dbReference>
<dbReference type="InterPro" id="IPR004413">
    <property type="entry name" value="GatB"/>
</dbReference>
<dbReference type="InterPro" id="IPR042114">
    <property type="entry name" value="GatB_C_1"/>
</dbReference>
<dbReference type="InterPro" id="IPR023168">
    <property type="entry name" value="GatB_Yqey_C_2"/>
</dbReference>
<dbReference type="InterPro" id="IPR017958">
    <property type="entry name" value="Gln-tRNA_amidoTrfase_suB_CS"/>
</dbReference>
<dbReference type="InterPro" id="IPR014746">
    <property type="entry name" value="Gln_synth/guanido_kin_cat_dom"/>
</dbReference>
<dbReference type="NCBIfam" id="TIGR00133">
    <property type="entry name" value="gatB"/>
    <property type="match status" value="1"/>
</dbReference>
<dbReference type="NCBIfam" id="NF004011">
    <property type="entry name" value="PRK05477.1-1"/>
    <property type="match status" value="1"/>
</dbReference>
<dbReference type="NCBIfam" id="NF004012">
    <property type="entry name" value="PRK05477.1-2"/>
    <property type="match status" value="1"/>
</dbReference>
<dbReference type="NCBIfam" id="NF004014">
    <property type="entry name" value="PRK05477.1-4"/>
    <property type="match status" value="1"/>
</dbReference>
<dbReference type="PANTHER" id="PTHR11659">
    <property type="entry name" value="GLUTAMYL-TRNA GLN AMIDOTRANSFERASE SUBUNIT B MITOCHONDRIAL AND PROKARYOTIC PET112-RELATED"/>
    <property type="match status" value="1"/>
</dbReference>
<dbReference type="PANTHER" id="PTHR11659:SF0">
    <property type="entry name" value="GLUTAMYL-TRNA(GLN) AMIDOTRANSFERASE SUBUNIT B, MITOCHONDRIAL"/>
    <property type="match status" value="1"/>
</dbReference>
<dbReference type="Pfam" id="PF02934">
    <property type="entry name" value="GatB_N"/>
    <property type="match status" value="1"/>
</dbReference>
<dbReference type="Pfam" id="PF02637">
    <property type="entry name" value="GatB_Yqey"/>
    <property type="match status" value="1"/>
</dbReference>
<dbReference type="SMART" id="SM00845">
    <property type="entry name" value="GatB_Yqey"/>
    <property type="match status" value="1"/>
</dbReference>
<dbReference type="SUPFAM" id="SSF89095">
    <property type="entry name" value="GatB/YqeY motif"/>
    <property type="match status" value="1"/>
</dbReference>
<dbReference type="SUPFAM" id="SSF55931">
    <property type="entry name" value="Glutamine synthetase/guanido kinase"/>
    <property type="match status" value="1"/>
</dbReference>
<dbReference type="PROSITE" id="PS01234">
    <property type="entry name" value="GATB"/>
    <property type="match status" value="1"/>
</dbReference>
<sequence length="475" mass="53220">MNLETIIGLEVHVELKTNSKIFSASPTEFGAEPNTQTSVIDLGYPGVLPTLNKEAVNFAMKAAMALNCEIATETKFDRKNYFYPDNPKAYQISQFDKPIGENGWIEIEVDGKKKRIGITRLHLEEDAGKSTHTADGSLVDYNRQGMPLIEIVSEPDMRTPEEAYAYLEKLKSIIQYTGVSDCKMEEGSLRCDANISLRPVGQEKFGTKAELKNLNSFTYVQKGLEFEQARQEKELLSGGIIQQETRRYDEATKKTILMRVKEGSDDYRYFPEPDLVELYIDDEWKEAVRASIPELPDARKARYVAELGLPAYDAHVLTLTKEMSDFFEATVADGADAKLTSNWLMGEVLAYLNKQQKELKDVALTPAGLSKMVQLIEKGTISSKIAKKVFNELIEKGGDPEEIVKAKGLVQISDEGTLRKVVTEILDNNEQSIEDFKNGKDRAIGFLVGQIMKATKGQANPPLVNKILLEEINKR</sequence>
<name>GATB_BACC7</name>
<keyword id="KW-0067">ATP-binding</keyword>
<keyword id="KW-0436">Ligase</keyword>
<keyword id="KW-0547">Nucleotide-binding</keyword>
<keyword id="KW-0648">Protein biosynthesis</keyword>
<comment type="function">
    <text evidence="1">Allows the formation of correctly charged Asn-tRNA(Asn) or Gln-tRNA(Gln) through the transamidation of misacylated Asp-tRNA(Asn) or Glu-tRNA(Gln) in organisms which lack either or both of asparaginyl-tRNA or glutaminyl-tRNA synthetases. The reaction takes place in the presence of glutamine and ATP through an activated phospho-Asp-tRNA(Asn) or phospho-Glu-tRNA(Gln).</text>
</comment>
<comment type="catalytic activity">
    <reaction evidence="1">
        <text>L-glutamyl-tRNA(Gln) + L-glutamine + ATP + H2O = L-glutaminyl-tRNA(Gln) + L-glutamate + ADP + phosphate + H(+)</text>
        <dbReference type="Rhea" id="RHEA:17521"/>
        <dbReference type="Rhea" id="RHEA-COMP:9681"/>
        <dbReference type="Rhea" id="RHEA-COMP:9684"/>
        <dbReference type="ChEBI" id="CHEBI:15377"/>
        <dbReference type="ChEBI" id="CHEBI:15378"/>
        <dbReference type="ChEBI" id="CHEBI:29985"/>
        <dbReference type="ChEBI" id="CHEBI:30616"/>
        <dbReference type="ChEBI" id="CHEBI:43474"/>
        <dbReference type="ChEBI" id="CHEBI:58359"/>
        <dbReference type="ChEBI" id="CHEBI:78520"/>
        <dbReference type="ChEBI" id="CHEBI:78521"/>
        <dbReference type="ChEBI" id="CHEBI:456216"/>
    </reaction>
</comment>
<comment type="catalytic activity">
    <reaction evidence="1">
        <text>L-aspartyl-tRNA(Asn) + L-glutamine + ATP + H2O = L-asparaginyl-tRNA(Asn) + L-glutamate + ADP + phosphate + 2 H(+)</text>
        <dbReference type="Rhea" id="RHEA:14513"/>
        <dbReference type="Rhea" id="RHEA-COMP:9674"/>
        <dbReference type="Rhea" id="RHEA-COMP:9677"/>
        <dbReference type="ChEBI" id="CHEBI:15377"/>
        <dbReference type="ChEBI" id="CHEBI:15378"/>
        <dbReference type="ChEBI" id="CHEBI:29985"/>
        <dbReference type="ChEBI" id="CHEBI:30616"/>
        <dbReference type="ChEBI" id="CHEBI:43474"/>
        <dbReference type="ChEBI" id="CHEBI:58359"/>
        <dbReference type="ChEBI" id="CHEBI:78515"/>
        <dbReference type="ChEBI" id="CHEBI:78516"/>
        <dbReference type="ChEBI" id="CHEBI:456216"/>
    </reaction>
</comment>
<comment type="subunit">
    <text evidence="1">Heterotrimer of A, B and C subunits.</text>
</comment>
<comment type="similarity">
    <text evidence="1">Belongs to the GatB/GatE family. GatB subfamily.</text>
</comment>
<accession>B7HSY1</accession>
<organism>
    <name type="scientific">Bacillus cereus (strain AH187)</name>
    <dbReference type="NCBI Taxonomy" id="405534"/>
    <lineage>
        <taxon>Bacteria</taxon>
        <taxon>Bacillati</taxon>
        <taxon>Bacillota</taxon>
        <taxon>Bacilli</taxon>
        <taxon>Bacillales</taxon>
        <taxon>Bacillaceae</taxon>
        <taxon>Bacillus</taxon>
        <taxon>Bacillus cereus group</taxon>
    </lineage>
</organism>
<protein>
    <recommendedName>
        <fullName evidence="1">Aspartyl/glutamyl-tRNA(Asn/Gln) amidotransferase subunit B</fullName>
        <shortName evidence="1">Asp/Glu-ADT subunit B</shortName>
        <ecNumber evidence="1">6.3.5.-</ecNumber>
    </recommendedName>
</protein>
<proteinExistence type="inferred from homology"/>